<gene>
    <name type="primary">yoqU</name>
    <name type="ordered locus">BSU20510</name>
</gene>
<dbReference type="EMBL" id="AL009126">
    <property type="protein sequence ID" value="CAB13943.1"/>
    <property type="molecule type" value="Genomic_DNA"/>
</dbReference>
<dbReference type="RefSeq" id="NP_389933.1">
    <property type="nucleotide sequence ID" value="NC_000964.3"/>
</dbReference>
<dbReference type="RefSeq" id="WP_004399463.1">
    <property type="nucleotide sequence ID" value="NZ_OZ025638.1"/>
</dbReference>
<dbReference type="FunCoup" id="O31918">
    <property type="interactions" value="63"/>
</dbReference>
<dbReference type="STRING" id="224308.BSU20510"/>
<dbReference type="PaxDb" id="224308-BSU20510"/>
<dbReference type="EnsemblBacteria" id="CAB13943">
    <property type="protein sequence ID" value="CAB13943"/>
    <property type="gene ID" value="BSU_20510"/>
</dbReference>
<dbReference type="GeneID" id="940143"/>
<dbReference type="KEGG" id="bsu:BSU20510"/>
<dbReference type="PATRIC" id="fig|224308.179.peg.2241"/>
<dbReference type="eggNOG" id="ENOG5034AMC">
    <property type="taxonomic scope" value="Bacteria"/>
</dbReference>
<dbReference type="InParanoid" id="O31918"/>
<dbReference type="OrthoDB" id="2628479at2"/>
<dbReference type="BioCyc" id="BSUB:BSU20510-MONOMER"/>
<dbReference type="Proteomes" id="UP000001570">
    <property type="component" value="Chromosome"/>
</dbReference>
<protein>
    <recommendedName>
        <fullName>SPbeta prophage-derived uncharacterized protein YoqU</fullName>
    </recommendedName>
</protein>
<keyword id="KW-1185">Reference proteome</keyword>
<name>YOQU_BACSU</name>
<sequence length="137" mass="16430">MPNQEQIKRMNDINDLIKLIASIDHRTFYRKSKDRIAYFRFKKKLFFVDDYTGDDVYPYEMGYGSPNGFSHGGNMWQLVNSFRKFIITGKCGELRDYKEIWAYSYEGCMKIRQKAKEIGFIETVDYPYSFDEWMNTN</sequence>
<proteinExistence type="predicted"/>
<accession>O31918</accession>
<reference key="1">
    <citation type="journal article" date="1997" name="Nature">
        <title>The complete genome sequence of the Gram-positive bacterium Bacillus subtilis.</title>
        <authorList>
            <person name="Kunst F."/>
            <person name="Ogasawara N."/>
            <person name="Moszer I."/>
            <person name="Albertini A.M."/>
            <person name="Alloni G."/>
            <person name="Azevedo V."/>
            <person name="Bertero M.G."/>
            <person name="Bessieres P."/>
            <person name="Bolotin A."/>
            <person name="Borchert S."/>
            <person name="Borriss R."/>
            <person name="Boursier L."/>
            <person name="Brans A."/>
            <person name="Braun M."/>
            <person name="Brignell S.C."/>
            <person name="Bron S."/>
            <person name="Brouillet S."/>
            <person name="Bruschi C.V."/>
            <person name="Caldwell B."/>
            <person name="Capuano V."/>
            <person name="Carter N.M."/>
            <person name="Choi S.-K."/>
            <person name="Codani J.-J."/>
            <person name="Connerton I.F."/>
            <person name="Cummings N.J."/>
            <person name="Daniel R.A."/>
            <person name="Denizot F."/>
            <person name="Devine K.M."/>
            <person name="Duesterhoeft A."/>
            <person name="Ehrlich S.D."/>
            <person name="Emmerson P.T."/>
            <person name="Entian K.-D."/>
            <person name="Errington J."/>
            <person name="Fabret C."/>
            <person name="Ferrari E."/>
            <person name="Foulger D."/>
            <person name="Fritz C."/>
            <person name="Fujita M."/>
            <person name="Fujita Y."/>
            <person name="Fuma S."/>
            <person name="Galizzi A."/>
            <person name="Galleron N."/>
            <person name="Ghim S.-Y."/>
            <person name="Glaser P."/>
            <person name="Goffeau A."/>
            <person name="Golightly E.J."/>
            <person name="Grandi G."/>
            <person name="Guiseppi G."/>
            <person name="Guy B.J."/>
            <person name="Haga K."/>
            <person name="Haiech J."/>
            <person name="Harwood C.R."/>
            <person name="Henaut A."/>
            <person name="Hilbert H."/>
            <person name="Holsappel S."/>
            <person name="Hosono S."/>
            <person name="Hullo M.-F."/>
            <person name="Itaya M."/>
            <person name="Jones L.-M."/>
            <person name="Joris B."/>
            <person name="Karamata D."/>
            <person name="Kasahara Y."/>
            <person name="Klaerr-Blanchard M."/>
            <person name="Klein C."/>
            <person name="Kobayashi Y."/>
            <person name="Koetter P."/>
            <person name="Koningstein G."/>
            <person name="Krogh S."/>
            <person name="Kumano M."/>
            <person name="Kurita K."/>
            <person name="Lapidus A."/>
            <person name="Lardinois S."/>
            <person name="Lauber J."/>
            <person name="Lazarevic V."/>
            <person name="Lee S.-M."/>
            <person name="Levine A."/>
            <person name="Liu H."/>
            <person name="Masuda S."/>
            <person name="Mauel C."/>
            <person name="Medigue C."/>
            <person name="Medina N."/>
            <person name="Mellado R.P."/>
            <person name="Mizuno M."/>
            <person name="Moestl D."/>
            <person name="Nakai S."/>
            <person name="Noback M."/>
            <person name="Noone D."/>
            <person name="O'Reilly M."/>
            <person name="Ogawa K."/>
            <person name="Ogiwara A."/>
            <person name="Oudega B."/>
            <person name="Park S.-H."/>
            <person name="Parro V."/>
            <person name="Pohl T.M."/>
            <person name="Portetelle D."/>
            <person name="Porwollik S."/>
            <person name="Prescott A.M."/>
            <person name="Presecan E."/>
            <person name="Pujic P."/>
            <person name="Purnelle B."/>
            <person name="Rapoport G."/>
            <person name="Rey M."/>
            <person name="Reynolds S."/>
            <person name="Rieger M."/>
            <person name="Rivolta C."/>
            <person name="Rocha E."/>
            <person name="Roche B."/>
            <person name="Rose M."/>
            <person name="Sadaie Y."/>
            <person name="Sato T."/>
            <person name="Scanlan E."/>
            <person name="Schleich S."/>
            <person name="Schroeter R."/>
            <person name="Scoffone F."/>
            <person name="Sekiguchi J."/>
            <person name="Sekowska A."/>
            <person name="Seror S.J."/>
            <person name="Serror P."/>
            <person name="Shin B.-S."/>
            <person name="Soldo B."/>
            <person name="Sorokin A."/>
            <person name="Tacconi E."/>
            <person name="Takagi T."/>
            <person name="Takahashi H."/>
            <person name="Takemaru K."/>
            <person name="Takeuchi M."/>
            <person name="Tamakoshi A."/>
            <person name="Tanaka T."/>
            <person name="Terpstra P."/>
            <person name="Tognoni A."/>
            <person name="Tosato V."/>
            <person name="Uchiyama S."/>
            <person name="Vandenbol M."/>
            <person name="Vannier F."/>
            <person name="Vassarotti A."/>
            <person name="Viari A."/>
            <person name="Wambutt R."/>
            <person name="Wedler E."/>
            <person name="Wedler H."/>
            <person name="Weitzenegger T."/>
            <person name="Winters P."/>
            <person name="Wipat A."/>
            <person name="Yamamoto H."/>
            <person name="Yamane K."/>
            <person name="Yasumoto K."/>
            <person name="Yata K."/>
            <person name="Yoshida K."/>
            <person name="Yoshikawa H.-F."/>
            <person name="Zumstein E."/>
            <person name="Yoshikawa H."/>
            <person name="Danchin A."/>
        </authorList>
    </citation>
    <scope>NUCLEOTIDE SEQUENCE [LARGE SCALE GENOMIC DNA]</scope>
    <source>
        <strain>168</strain>
    </source>
</reference>
<feature type="chain" id="PRO_0000360477" description="SPbeta prophage-derived uncharacterized protein YoqU">
    <location>
        <begin position="1"/>
        <end position="137"/>
    </location>
</feature>
<organism>
    <name type="scientific">Bacillus subtilis (strain 168)</name>
    <dbReference type="NCBI Taxonomy" id="224308"/>
    <lineage>
        <taxon>Bacteria</taxon>
        <taxon>Bacillati</taxon>
        <taxon>Bacillota</taxon>
        <taxon>Bacilli</taxon>
        <taxon>Bacillales</taxon>
        <taxon>Bacillaceae</taxon>
        <taxon>Bacillus</taxon>
    </lineage>
</organism>